<evidence type="ECO:0000255" key="1">
    <source>
        <dbReference type="HAMAP-Rule" id="MF_00038"/>
    </source>
</evidence>
<reference key="1">
    <citation type="journal article" date="2008" name="PLoS ONE">
        <title>Genome sequence of the saprophyte Leptospira biflexa provides insights into the evolution of Leptospira and the pathogenesis of leptospirosis.</title>
        <authorList>
            <person name="Picardeau M."/>
            <person name="Bulach D.M."/>
            <person name="Bouchier C."/>
            <person name="Zuerner R.L."/>
            <person name="Zidane N."/>
            <person name="Wilson P.J."/>
            <person name="Creno S."/>
            <person name="Kuczek E.S."/>
            <person name="Bommezzadri S."/>
            <person name="Davis J.C."/>
            <person name="McGrath A."/>
            <person name="Johnson M.J."/>
            <person name="Boursaux-Eude C."/>
            <person name="Seemann T."/>
            <person name="Rouy Z."/>
            <person name="Coppel R.L."/>
            <person name="Rood J.I."/>
            <person name="Lajus A."/>
            <person name="Davies J.K."/>
            <person name="Medigue C."/>
            <person name="Adler B."/>
        </authorList>
    </citation>
    <scope>NUCLEOTIDE SEQUENCE [LARGE SCALE GENOMIC DNA]</scope>
    <source>
        <strain>Patoc 1 / Ames</strain>
    </source>
</reference>
<keyword id="KW-0131">Cell cycle</keyword>
<keyword id="KW-0132">Cell division</keyword>
<keyword id="KW-0997">Cell inner membrane</keyword>
<keyword id="KW-1003">Cell membrane</keyword>
<keyword id="KW-0133">Cell shape</keyword>
<keyword id="KW-0961">Cell wall biogenesis/degradation</keyword>
<keyword id="KW-0460">Magnesium</keyword>
<keyword id="KW-0472">Membrane</keyword>
<keyword id="KW-0479">Metal-binding</keyword>
<keyword id="KW-0573">Peptidoglycan synthesis</keyword>
<keyword id="KW-0808">Transferase</keyword>
<keyword id="KW-0812">Transmembrane</keyword>
<keyword id="KW-1133">Transmembrane helix</keyword>
<proteinExistence type="inferred from homology"/>
<comment type="function">
    <text evidence="1">Catalyzes the initial step of the lipid cycle reactions in the biosynthesis of the cell wall peptidoglycan: transfers peptidoglycan precursor phospho-MurNAc-pentapeptide from UDP-MurNAc-pentapeptide onto the lipid carrier undecaprenyl phosphate, yielding undecaprenyl-pyrophosphoryl-MurNAc-pentapeptide, known as lipid I.</text>
</comment>
<comment type="catalytic activity">
    <reaction evidence="1">
        <text>UDP-N-acetyl-alpha-D-muramoyl-L-alanyl-gamma-D-glutamyl-meso-2,6-diaminopimeloyl-D-alanyl-D-alanine + di-trans,octa-cis-undecaprenyl phosphate = di-trans,octa-cis-undecaprenyl diphospho-N-acetyl-alpha-D-muramoyl-L-alanyl-D-glutamyl-meso-2,6-diaminopimeloyl-D-alanyl-D-alanine + UMP</text>
        <dbReference type="Rhea" id="RHEA:28386"/>
        <dbReference type="ChEBI" id="CHEBI:57865"/>
        <dbReference type="ChEBI" id="CHEBI:60392"/>
        <dbReference type="ChEBI" id="CHEBI:61386"/>
        <dbReference type="ChEBI" id="CHEBI:61387"/>
        <dbReference type="EC" id="2.7.8.13"/>
    </reaction>
</comment>
<comment type="cofactor">
    <cofactor evidence="1">
        <name>Mg(2+)</name>
        <dbReference type="ChEBI" id="CHEBI:18420"/>
    </cofactor>
</comment>
<comment type="pathway">
    <text evidence="1">Cell wall biogenesis; peptidoglycan biosynthesis.</text>
</comment>
<comment type="subcellular location">
    <subcellularLocation>
        <location evidence="1">Cell inner membrane</location>
        <topology evidence="1">Multi-pass membrane protein</topology>
    </subcellularLocation>
</comment>
<comment type="similarity">
    <text evidence="1">Belongs to the glycosyltransferase 4 family. MraY subfamily.</text>
</comment>
<sequence>MFQWIYESFGNDYGFLRVFSYVTLRAMMAGLTSMFITFIFGKSLISFLLSLKFRESVRNDGPQSHANKSGTPTMGGLIMILSLTISTLLWGNLSNWNVILLLISAILFAGLGFTDDYMKSVKKIKGGMRARTKFIVTILFAVTITTLYFYYTGKSNVNLQKGIVFSITDLFLPFVKGPVWNLGIFAVPFAIIVLIGSSHAVNLTDGLDGLASGTVVISTATFALIAYVSGTPSAANYLHIPYLPGSHEYSVFLAGLSGALLGFLWFNCHPAQVFMGDTGSLFLGSTLGLVAIMLKKEILLVILGGIFVAEAVSVILQVGSFKLTGKRIFKMAPLHHHFELSGWSEEKVVIRFWIIGIILAIITLSTLKIQ</sequence>
<organism>
    <name type="scientific">Leptospira biflexa serovar Patoc (strain Patoc 1 / Ames)</name>
    <dbReference type="NCBI Taxonomy" id="355278"/>
    <lineage>
        <taxon>Bacteria</taxon>
        <taxon>Pseudomonadati</taxon>
        <taxon>Spirochaetota</taxon>
        <taxon>Spirochaetia</taxon>
        <taxon>Leptospirales</taxon>
        <taxon>Leptospiraceae</taxon>
        <taxon>Leptospira</taxon>
    </lineage>
</organism>
<feature type="chain" id="PRO_1000090638" description="Phospho-N-acetylmuramoyl-pentapeptide-transferase">
    <location>
        <begin position="1"/>
        <end position="370"/>
    </location>
</feature>
<feature type="transmembrane region" description="Helical" evidence="1">
    <location>
        <begin position="29"/>
        <end position="49"/>
    </location>
</feature>
<feature type="transmembrane region" description="Helical" evidence="1">
    <location>
        <begin position="70"/>
        <end position="90"/>
    </location>
</feature>
<feature type="transmembrane region" description="Helical" evidence="1">
    <location>
        <begin position="93"/>
        <end position="113"/>
    </location>
</feature>
<feature type="transmembrane region" description="Helical" evidence="1">
    <location>
        <begin position="133"/>
        <end position="153"/>
    </location>
</feature>
<feature type="transmembrane region" description="Helical" evidence="1">
    <location>
        <begin position="177"/>
        <end position="197"/>
    </location>
</feature>
<feature type="transmembrane region" description="Helical" evidence="1">
    <location>
        <begin position="209"/>
        <end position="229"/>
    </location>
</feature>
<feature type="transmembrane region" description="Helical" evidence="1">
    <location>
        <begin position="251"/>
        <end position="271"/>
    </location>
</feature>
<feature type="transmembrane region" description="Helical" evidence="1">
    <location>
        <begin position="273"/>
        <end position="293"/>
    </location>
</feature>
<feature type="transmembrane region" description="Helical" evidence="1">
    <location>
        <begin position="298"/>
        <end position="318"/>
    </location>
</feature>
<feature type="transmembrane region" description="Helical" evidence="1">
    <location>
        <begin position="349"/>
        <end position="369"/>
    </location>
</feature>
<name>MRAY_LEPBA</name>
<accession>B0S986</accession>
<gene>
    <name evidence="1" type="primary">mraY</name>
    <name type="ordered locus">LBF_1706</name>
</gene>
<protein>
    <recommendedName>
        <fullName evidence="1">Phospho-N-acetylmuramoyl-pentapeptide-transferase</fullName>
        <ecNumber evidence="1">2.7.8.13</ecNumber>
    </recommendedName>
    <alternativeName>
        <fullName evidence="1">UDP-MurNAc-pentapeptide phosphotransferase</fullName>
    </alternativeName>
</protein>
<dbReference type="EC" id="2.7.8.13" evidence="1"/>
<dbReference type="EMBL" id="CP000777">
    <property type="protein sequence ID" value="ABZ94213.1"/>
    <property type="molecule type" value="Genomic_DNA"/>
</dbReference>
<dbReference type="RefSeq" id="WP_012388743.1">
    <property type="nucleotide sequence ID" value="NC_010842.1"/>
</dbReference>
<dbReference type="SMR" id="B0S986"/>
<dbReference type="KEGG" id="lbf:LBF_1706"/>
<dbReference type="HOGENOM" id="CLU_023982_0_0_12"/>
<dbReference type="UniPathway" id="UPA00219"/>
<dbReference type="GO" id="GO:0005886">
    <property type="term" value="C:plasma membrane"/>
    <property type="evidence" value="ECO:0007669"/>
    <property type="project" value="UniProtKB-SubCell"/>
</dbReference>
<dbReference type="GO" id="GO:0046872">
    <property type="term" value="F:metal ion binding"/>
    <property type="evidence" value="ECO:0007669"/>
    <property type="project" value="UniProtKB-KW"/>
</dbReference>
<dbReference type="GO" id="GO:0008963">
    <property type="term" value="F:phospho-N-acetylmuramoyl-pentapeptide-transferase activity"/>
    <property type="evidence" value="ECO:0007669"/>
    <property type="project" value="UniProtKB-UniRule"/>
</dbReference>
<dbReference type="GO" id="GO:0051992">
    <property type="term" value="F:UDP-N-acetylmuramoyl-L-alanyl-D-glutamyl-meso-2,6-diaminopimelyl-D-alanyl-D-alanine:undecaprenyl-phosphate transferase activity"/>
    <property type="evidence" value="ECO:0007669"/>
    <property type="project" value="RHEA"/>
</dbReference>
<dbReference type="GO" id="GO:0051301">
    <property type="term" value="P:cell division"/>
    <property type="evidence" value="ECO:0007669"/>
    <property type="project" value="UniProtKB-KW"/>
</dbReference>
<dbReference type="GO" id="GO:0071555">
    <property type="term" value="P:cell wall organization"/>
    <property type="evidence" value="ECO:0007669"/>
    <property type="project" value="UniProtKB-KW"/>
</dbReference>
<dbReference type="GO" id="GO:0009252">
    <property type="term" value="P:peptidoglycan biosynthetic process"/>
    <property type="evidence" value="ECO:0007669"/>
    <property type="project" value="UniProtKB-UniRule"/>
</dbReference>
<dbReference type="GO" id="GO:0008360">
    <property type="term" value="P:regulation of cell shape"/>
    <property type="evidence" value="ECO:0007669"/>
    <property type="project" value="UniProtKB-KW"/>
</dbReference>
<dbReference type="CDD" id="cd06852">
    <property type="entry name" value="GT_MraY"/>
    <property type="match status" value="1"/>
</dbReference>
<dbReference type="HAMAP" id="MF_00038">
    <property type="entry name" value="MraY"/>
    <property type="match status" value="1"/>
</dbReference>
<dbReference type="InterPro" id="IPR000715">
    <property type="entry name" value="Glycosyl_transferase_4"/>
</dbReference>
<dbReference type="InterPro" id="IPR003524">
    <property type="entry name" value="PNAcMuramoyl-5peptid_Trfase"/>
</dbReference>
<dbReference type="InterPro" id="IPR018480">
    <property type="entry name" value="PNAcMuramoyl-5peptid_Trfase_CS"/>
</dbReference>
<dbReference type="NCBIfam" id="TIGR00445">
    <property type="entry name" value="mraY"/>
    <property type="match status" value="1"/>
</dbReference>
<dbReference type="PANTHER" id="PTHR22926">
    <property type="entry name" value="PHOSPHO-N-ACETYLMURAMOYL-PENTAPEPTIDE-TRANSFERASE"/>
    <property type="match status" value="1"/>
</dbReference>
<dbReference type="PANTHER" id="PTHR22926:SF5">
    <property type="entry name" value="PHOSPHO-N-ACETYLMURAMOYL-PENTAPEPTIDE-TRANSFERASE HOMOLOG"/>
    <property type="match status" value="1"/>
</dbReference>
<dbReference type="Pfam" id="PF00953">
    <property type="entry name" value="Glycos_transf_4"/>
    <property type="match status" value="1"/>
</dbReference>
<dbReference type="Pfam" id="PF10555">
    <property type="entry name" value="MraY_sig1"/>
    <property type="match status" value="1"/>
</dbReference>
<dbReference type="PROSITE" id="PS01347">
    <property type="entry name" value="MRAY_1"/>
    <property type="match status" value="1"/>
</dbReference>
<dbReference type="PROSITE" id="PS01348">
    <property type="entry name" value="MRAY_2"/>
    <property type="match status" value="1"/>
</dbReference>